<reference key="1">
    <citation type="journal article" date="2009" name="BMC Genomics">
        <title>The complete genome sequence of Staphylothermus marinus reveals differences in sulfur metabolism among heterotrophic Crenarchaeota.</title>
        <authorList>
            <person name="Anderson I.J."/>
            <person name="Dharmarajan L."/>
            <person name="Rodriguez J."/>
            <person name="Hooper S."/>
            <person name="Porat I."/>
            <person name="Ulrich L.E."/>
            <person name="Elkins J.G."/>
            <person name="Mavromatis K."/>
            <person name="Sun H."/>
            <person name="Land M."/>
            <person name="Lapidus A."/>
            <person name="Lucas S."/>
            <person name="Barry K."/>
            <person name="Huber H."/>
            <person name="Zhulin I.B."/>
            <person name="Whitman W.B."/>
            <person name="Mukhopadhyay B."/>
            <person name="Woese C."/>
            <person name="Bristow J."/>
            <person name="Kyrpides N."/>
        </authorList>
    </citation>
    <scope>NUCLEOTIDE SEQUENCE [LARGE SCALE GENOMIC DNA]</scope>
    <source>
        <strain>ATCC 43588 / DSM 3639 / JCM 9404 / F1</strain>
    </source>
</reference>
<reference key="2">
    <citation type="journal article" date="2009" name="Stand. Genomic Sci.">
        <title>Complete genome sequence of Staphylothermus marinus Stetter and Fiala 1986 type strain F1.</title>
        <authorList>
            <person name="Anderson I.J."/>
            <person name="Sun H."/>
            <person name="Lapidus A."/>
            <person name="Copeland A."/>
            <person name="Glavina Del Rio T."/>
            <person name="Tice H."/>
            <person name="Dalin E."/>
            <person name="Lucas S."/>
            <person name="Barry K."/>
            <person name="Land M."/>
            <person name="Richardson P."/>
            <person name="Huber H."/>
            <person name="Kyrpides N.C."/>
        </authorList>
    </citation>
    <scope>NUCLEOTIDE SEQUENCE [LARGE SCALE GENOMIC DNA]</scope>
    <source>
        <strain>ATCC 43588 / DSM 3639 / JCM 9404 / F1</strain>
    </source>
</reference>
<gene>
    <name evidence="1" type="primary">serS</name>
    <name type="ordered locus">Smar_1354</name>
</gene>
<dbReference type="EC" id="6.1.1.11" evidence="1"/>
<dbReference type="EMBL" id="CP000575">
    <property type="protein sequence ID" value="ABN70445.1"/>
    <property type="molecule type" value="Genomic_DNA"/>
</dbReference>
<dbReference type="RefSeq" id="WP_011839639.1">
    <property type="nucleotide sequence ID" value="NC_009033.1"/>
</dbReference>
<dbReference type="SMR" id="A3DP85"/>
<dbReference type="STRING" id="399550.Smar_1354"/>
<dbReference type="GeneID" id="4908090"/>
<dbReference type="KEGG" id="smr:Smar_1354"/>
<dbReference type="eggNOG" id="arCOG00403">
    <property type="taxonomic scope" value="Archaea"/>
</dbReference>
<dbReference type="HOGENOM" id="CLU_023797_0_1_2"/>
<dbReference type="OrthoDB" id="35932at2157"/>
<dbReference type="UniPathway" id="UPA00906">
    <property type="reaction ID" value="UER00895"/>
</dbReference>
<dbReference type="Proteomes" id="UP000000254">
    <property type="component" value="Chromosome"/>
</dbReference>
<dbReference type="GO" id="GO:0005737">
    <property type="term" value="C:cytoplasm"/>
    <property type="evidence" value="ECO:0007669"/>
    <property type="project" value="UniProtKB-SubCell"/>
</dbReference>
<dbReference type="GO" id="GO:0005524">
    <property type="term" value="F:ATP binding"/>
    <property type="evidence" value="ECO:0007669"/>
    <property type="project" value="UniProtKB-UniRule"/>
</dbReference>
<dbReference type="GO" id="GO:0004828">
    <property type="term" value="F:serine-tRNA ligase activity"/>
    <property type="evidence" value="ECO:0007669"/>
    <property type="project" value="UniProtKB-UniRule"/>
</dbReference>
<dbReference type="GO" id="GO:0016260">
    <property type="term" value="P:selenocysteine biosynthetic process"/>
    <property type="evidence" value="ECO:0007669"/>
    <property type="project" value="UniProtKB-UniRule"/>
</dbReference>
<dbReference type="GO" id="GO:0006434">
    <property type="term" value="P:seryl-tRNA aminoacylation"/>
    <property type="evidence" value="ECO:0007669"/>
    <property type="project" value="UniProtKB-UniRule"/>
</dbReference>
<dbReference type="CDD" id="cd00770">
    <property type="entry name" value="SerRS_core"/>
    <property type="match status" value="1"/>
</dbReference>
<dbReference type="FunFam" id="3.30.930.10:FF:000048">
    <property type="entry name" value="Serine--tRNA ligase"/>
    <property type="match status" value="1"/>
</dbReference>
<dbReference type="Gene3D" id="3.30.930.10">
    <property type="entry name" value="Bira Bifunctional Protein, Domain 2"/>
    <property type="match status" value="1"/>
</dbReference>
<dbReference type="Gene3D" id="1.10.287.40">
    <property type="entry name" value="Serine-tRNA synthetase, tRNA binding domain"/>
    <property type="match status" value="1"/>
</dbReference>
<dbReference type="HAMAP" id="MF_00176">
    <property type="entry name" value="Ser_tRNA_synth_type1"/>
    <property type="match status" value="1"/>
</dbReference>
<dbReference type="InterPro" id="IPR002314">
    <property type="entry name" value="aa-tRNA-synt_IIb"/>
</dbReference>
<dbReference type="InterPro" id="IPR006195">
    <property type="entry name" value="aa-tRNA-synth_II"/>
</dbReference>
<dbReference type="InterPro" id="IPR045864">
    <property type="entry name" value="aa-tRNA-synth_II/BPL/LPL"/>
</dbReference>
<dbReference type="InterPro" id="IPR002317">
    <property type="entry name" value="Ser-tRNA-ligase_type_1"/>
</dbReference>
<dbReference type="InterPro" id="IPR015866">
    <property type="entry name" value="Ser-tRNA-synth_1_N"/>
</dbReference>
<dbReference type="InterPro" id="IPR042103">
    <property type="entry name" value="SerRS_1_N_sf"/>
</dbReference>
<dbReference type="InterPro" id="IPR033729">
    <property type="entry name" value="SerRS_core"/>
</dbReference>
<dbReference type="InterPro" id="IPR010978">
    <property type="entry name" value="tRNA-bd_arm"/>
</dbReference>
<dbReference type="NCBIfam" id="TIGR00414">
    <property type="entry name" value="serS"/>
    <property type="match status" value="1"/>
</dbReference>
<dbReference type="PANTHER" id="PTHR11778">
    <property type="entry name" value="SERYL-TRNA SYNTHETASE"/>
    <property type="match status" value="1"/>
</dbReference>
<dbReference type="Pfam" id="PF02403">
    <property type="entry name" value="Seryl_tRNA_N"/>
    <property type="match status" value="1"/>
</dbReference>
<dbReference type="Pfam" id="PF00587">
    <property type="entry name" value="tRNA-synt_2b"/>
    <property type="match status" value="1"/>
</dbReference>
<dbReference type="PIRSF" id="PIRSF001529">
    <property type="entry name" value="Ser-tRNA-synth_IIa"/>
    <property type="match status" value="1"/>
</dbReference>
<dbReference type="PRINTS" id="PR00981">
    <property type="entry name" value="TRNASYNTHSER"/>
</dbReference>
<dbReference type="SUPFAM" id="SSF55681">
    <property type="entry name" value="Class II aaRS and biotin synthetases"/>
    <property type="match status" value="1"/>
</dbReference>
<dbReference type="SUPFAM" id="SSF46589">
    <property type="entry name" value="tRNA-binding arm"/>
    <property type="match status" value="1"/>
</dbReference>
<dbReference type="PROSITE" id="PS50862">
    <property type="entry name" value="AA_TRNA_LIGASE_II"/>
    <property type="match status" value="1"/>
</dbReference>
<comment type="function">
    <text evidence="1">Catalyzes the attachment of serine to tRNA(Ser). Is also able to aminoacylate tRNA(Sec) with serine, to form the misacylated tRNA L-seryl-tRNA(Sec), which will be further converted into selenocysteinyl-tRNA(Sec).</text>
</comment>
<comment type="catalytic activity">
    <reaction evidence="1">
        <text>tRNA(Ser) + L-serine + ATP = L-seryl-tRNA(Ser) + AMP + diphosphate + H(+)</text>
        <dbReference type="Rhea" id="RHEA:12292"/>
        <dbReference type="Rhea" id="RHEA-COMP:9669"/>
        <dbReference type="Rhea" id="RHEA-COMP:9703"/>
        <dbReference type="ChEBI" id="CHEBI:15378"/>
        <dbReference type="ChEBI" id="CHEBI:30616"/>
        <dbReference type="ChEBI" id="CHEBI:33019"/>
        <dbReference type="ChEBI" id="CHEBI:33384"/>
        <dbReference type="ChEBI" id="CHEBI:78442"/>
        <dbReference type="ChEBI" id="CHEBI:78533"/>
        <dbReference type="ChEBI" id="CHEBI:456215"/>
        <dbReference type="EC" id="6.1.1.11"/>
    </reaction>
</comment>
<comment type="catalytic activity">
    <reaction evidence="1">
        <text>tRNA(Sec) + L-serine + ATP = L-seryl-tRNA(Sec) + AMP + diphosphate + H(+)</text>
        <dbReference type="Rhea" id="RHEA:42580"/>
        <dbReference type="Rhea" id="RHEA-COMP:9742"/>
        <dbReference type="Rhea" id="RHEA-COMP:10128"/>
        <dbReference type="ChEBI" id="CHEBI:15378"/>
        <dbReference type="ChEBI" id="CHEBI:30616"/>
        <dbReference type="ChEBI" id="CHEBI:33019"/>
        <dbReference type="ChEBI" id="CHEBI:33384"/>
        <dbReference type="ChEBI" id="CHEBI:78442"/>
        <dbReference type="ChEBI" id="CHEBI:78533"/>
        <dbReference type="ChEBI" id="CHEBI:456215"/>
        <dbReference type="EC" id="6.1.1.11"/>
    </reaction>
</comment>
<comment type="pathway">
    <text evidence="1">Aminoacyl-tRNA biosynthesis; selenocysteinyl-tRNA(Sec) biosynthesis; L-seryl-tRNA(Sec) from L-serine and tRNA(Sec): step 1/1.</text>
</comment>
<comment type="subunit">
    <text evidence="1">Homodimer. The tRNA molecule binds across the dimer.</text>
</comment>
<comment type="subcellular location">
    <subcellularLocation>
        <location evidence="1">Cytoplasm</location>
    </subcellularLocation>
</comment>
<comment type="domain">
    <text evidence="1">Consists of two distinct domains, a catalytic core and a N-terminal extension that is involved in tRNA binding.</text>
</comment>
<comment type="similarity">
    <text evidence="1">Belongs to the class-II aminoacyl-tRNA synthetase family. Type-1 seryl-tRNA synthetase subfamily.</text>
</comment>
<keyword id="KW-0030">Aminoacyl-tRNA synthetase</keyword>
<keyword id="KW-0067">ATP-binding</keyword>
<keyword id="KW-0963">Cytoplasm</keyword>
<keyword id="KW-0436">Ligase</keyword>
<keyword id="KW-0547">Nucleotide-binding</keyword>
<keyword id="KW-0648">Protein biosynthesis</keyword>
<keyword id="KW-1185">Reference proteome</keyword>
<organism>
    <name type="scientific">Staphylothermus marinus (strain ATCC 43588 / DSM 3639 / JCM 9404 / F1)</name>
    <dbReference type="NCBI Taxonomy" id="399550"/>
    <lineage>
        <taxon>Archaea</taxon>
        <taxon>Thermoproteota</taxon>
        <taxon>Thermoprotei</taxon>
        <taxon>Desulfurococcales</taxon>
        <taxon>Desulfurococcaceae</taxon>
        <taxon>Staphylothermus</taxon>
    </lineage>
</organism>
<accession>A3DP85</accession>
<protein>
    <recommendedName>
        <fullName evidence="1">Serine--tRNA ligase</fullName>
        <ecNumber evidence="1">6.1.1.11</ecNumber>
    </recommendedName>
    <alternativeName>
        <fullName evidence="1">Seryl-tRNA synthetase</fullName>
        <shortName evidence="1">SerRS</shortName>
    </alternativeName>
    <alternativeName>
        <fullName evidence="1">Seryl-tRNA(Ser/Sec) synthetase</fullName>
    </alternativeName>
</protein>
<feature type="chain" id="PRO_1000019833" description="Serine--tRNA ligase">
    <location>
        <begin position="1"/>
        <end position="459"/>
    </location>
</feature>
<feature type="binding site" evidence="1">
    <location>
        <begin position="254"/>
        <end position="256"/>
    </location>
    <ligand>
        <name>L-serine</name>
        <dbReference type="ChEBI" id="CHEBI:33384"/>
    </ligand>
</feature>
<feature type="binding site" evidence="1">
    <location>
        <begin position="285"/>
        <end position="287"/>
    </location>
    <ligand>
        <name>ATP</name>
        <dbReference type="ChEBI" id="CHEBI:30616"/>
    </ligand>
</feature>
<feature type="binding site" evidence="1">
    <location>
        <position position="301"/>
    </location>
    <ligand>
        <name>ATP</name>
        <dbReference type="ChEBI" id="CHEBI:30616"/>
    </ligand>
</feature>
<feature type="binding site" evidence="1">
    <location>
        <position position="308"/>
    </location>
    <ligand>
        <name>L-serine</name>
        <dbReference type="ChEBI" id="CHEBI:33384"/>
    </ligand>
</feature>
<feature type="binding site" evidence="1">
    <location>
        <begin position="372"/>
        <end position="375"/>
    </location>
    <ligand>
        <name>ATP</name>
        <dbReference type="ChEBI" id="CHEBI:30616"/>
    </ligand>
</feature>
<feature type="binding site" evidence="1">
    <location>
        <position position="408"/>
    </location>
    <ligand>
        <name>L-serine</name>
        <dbReference type="ChEBI" id="CHEBI:33384"/>
    </ligand>
</feature>
<name>SYS_STAMF</name>
<sequence length="459" mass="53487">MSWSILKLLREKPEELKEHVKKRFMDPSIVDEAYKTDLEWRRTLTYIQELRHKHNVVSREIPKLKGVDKEKKIKEAKQLLKELEEVEKKLKELEEKRQKLLFSLPNIVHETVPVGPDDTYNVPIRFWGKPRVWKGFIDQFKEQTEKYGFKVEYEVIDWKPVGHADMLEKVLRLGDTFKAGQVAGSRFYYLFNDIVFLDMALLAYAIDYLTSKGYTLVLPPYMLRHKVMMGVIDMDTFKDAIYKIEGEDLYLIATAEHPLAALHAWEDIPEEELPLKYVGISPCFRKEAGAGNRDLKGIFRVHQFHKVEQFVYAKPEDSWDIMEELISNAEHLFRGLGIPYRIVNIASGDLGAPAAKKYDLEAWMPAQGRYREMVSCSNVTDWQAFRLRIRLIRRKGMVKEYLHTLNSTAIASTRTITAILENFQEPDGTVIVPKVLRKYLEVFKSAPIDAIHPVKKEKN</sequence>
<proteinExistence type="inferred from homology"/>
<evidence type="ECO:0000255" key="1">
    <source>
        <dbReference type="HAMAP-Rule" id="MF_00176"/>
    </source>
</evidence>